<evidence type="ECO:0000255" key="1">
    <source>
        <dbReference type="HAMAP-Rule" id="MF_00147"/>
    </source>
</evidence>
<dbReference type="EC" id="5.3.1.1" evidence="1"/>
<dbReference type="EMBL" id="CP000492">
    <property type="protein sequence ID" value="ABL65868.1"/>
    <property type="molecule type" value="Genomic_DNA"/>
</dbReference>
<dbReference type="RefSeq" id="WP_011745675.1">
    <property type="nucleotide sequence ID" value="NC_008639.1"/>
</dbReference>
<dbReference type="SMR" id="A1BHJ1"/>
<dbReference type="STRING" id="290317.Cpha266_1852"/>
<dbReference type="KEGG" id="cph:Cpha266_1852"/>
<dbReference type="eggNOG" id="COG0149">
    <property type="taxonomic scope" value="Bacteria"/>
</dbReference>
<dbReference type="HOGENOM" id="CLU_024251_2_1_10"/>
<dbReference type="OrthoDB" id="9809429at2"/>
<dbReference type="UniPathway" id="UPA00109">
    <property type="reaction ID" value="UER00189"/>
</dbReference>
<dbReference type="UniPathway" id="UPA00138"/>
<dbReference type="Proteomes" id="UP000008701">
    <property type="component" value="Chromosome"/>
</dbReference>
<dbReference type="GO" id="GO:0005829">
    <property type="term" value="C:cytosol"/>
    <property type="evidence" value="ECO:0007669"/>
    <property type="project" value="TreeGrafter"/>
</dbReference>
<dbReference type="GO" id="GO:0004807">
    <property type="term" value="F:triose-phosphate isomerase activity"/>
    <property type="evidence" value="ECO:0007669"/>
    <property type="project" value="UniProtKB-UniRule"/>
</dbReference>
<dbReference type="GO" id="GO:0006094">
    <property type="term" value="P:gluconeogenesis"/>
    <property type="evidence" value="ECO:0007669"/>
    <property type="project" value="UniProtKB-UniRule"/>
</dbReference>
<dbReference type="GO" id="GO:0046166">
    <property type="term" value="P:glyceraldehyde-3-phosphate biosynthetic process"/>
    <property type="evidence" value="ECO:0007669"/>
    <property type="project" value="TreeGrafter"/>
</dbReference>
<dbReference type="GO" id="GO:0019563">
    <property type="term" value="P:glycerol catabolic process"/>
    <property type="evidence" value="ECO:0007669"/>
    <property type="project" value="TreeGrafter"/>
</dbReference>
<dbReference type="GO" id="GO:0006096">
    <property type="term" value="P:glycolytic process"/>
    <property type="evidence" value="ECO:0007669"/>
    <property type="project" value="UniProtKB-UniRule"/>
</dbReference>
<dbReference type="CDD" id="cd00311">
    <property type="entry name" value="TIM"/>
    <property type="match status" value="1"/>
</dbReference>
<dbReference type="FunFam" id="3.20.20.70:FF:000016">
    <property type="entry name" value="Triosephosphate isomerase"/>
    <property type="match status" value="1"/>
</dbReference>
<dbReference type="Gene3D" id="3.20.20.70">
    <property type="entry name" value="Aldolase class I"/>
    <property type="match status" value="1"/>
</dbReference>
<dbReference type="HAMAP" id="MF_00147_B">
    <property type="entry name" value="TIM_B"/>
    <property type="match status" value="1"/>
</dbReference>
<dbReference type="InterPro" id="IPR013785">
    <property type="entry name" value="Aldolase_TIM"/>
</dbReference>
<dbReference type="InterPro" id="IPR035990">
    <property type="entry name" value="TIM_sf"/>
</dbReference>
<dbReference type="InterPro" id="IPR022896">
    <property type="entry name" value="TrioseP_Isoase_bac/euk"/>
</dbReference>
<dbReference type="InterPro" id="IPR000652">
    <property type="entry name" value="Triosephosphate_isomerase"/>
</dbReference>
<dbReference type="InterPro" id="IPR020861">
    <property type="entry name" value="Triosephosphate_isomerase_AS"/>
</dbReference>
<dbReference type="NCBIfam" id="TIGR00419">
    <property type="entry name" value="tim"/>
    <property type="match status" value="1"/>
</dbReference>
<dbReference type="PANTHER" id="PTHR21139">
    <property type="entry name" value="TRIOSEPHOSPHATE ISOMERASE"/>
    <property type="match status" value="1"/>
</dbReference>
<dbReference type="PANTHER" id="PTHR21139:SF42">
    <property type="entry name" value="TRIOSEPHOSPHATE ISOMERASE"/>
    <property type="match status" value="1"/>
</dbReference>
<dbReference type="Pfam" id="PF00121">
    <property type="entry name" value="TIM"/>
    <property type="match status" value="1"/>
</dbReference>
<dbReference type="SUPFAM" id="SSF51351">
    <property type="entry name" value="Triosephosphate isomerase (TIM)"/>
    <property type="match status" value="1"/>
</dbReference>
<dbReference type="PROSITE" id="PS00171">
    <property type="entry name" value="TIM_1"/>
    <property type="match status" value="1"/>
</dbReference>
<dbReference type="PROSITE" id="PS51440">
    <property type="entry name" value="TIM_2"/>
    <property type="match status" value="1"/>
</dbReference>
<keyword id="KW-0963">Cytoplasm</keyword>
<keyword id="KW-0312">Gluconeogenesis</keyword>
<keyword id="KW-0324">Glycolysis</keyword>
<keyword id="KW-0413">Isomerase</keyword>
<keyword id="KW-1185">Reference proteome</keyword>
<accession>A1BHJ1</accession>
<name>TPIS_CHLPD</name>
<protein>
    <recommendedName>
        <fullName evidence="1">Triosephosphate isomerase</fullName>
        <shortName evidence="1">TIM</shortName>
        <shortName evidence="1">TPI</shortName>
        <ecNumber evidence="1">5.3.1.1</ecNumber>
    </recommendedName>
    <alternativeName>
        <fullName evidence="1">Triose-phosphate isomerase</fullName>
    </alternativeName>
</protein>
<proteinExistence type="inferred from homology"/>
<comment type="function">
    <text evidence="1">Involved in the gluconeogenesis. Catalyzes stereospecifically the conversion of dihydroxyacetone phosphate (DHAP) to D-glyceraldehyde-3-phosphate (G3P).</text>
</comment>
<comment type="catalytic activity">
    <reaction evidence="1">
        <text>D-glyceraldehyde 3-phosphate = dihydroxyacetone phosphate</text>
        <dbReference type="Rhea" id="RHEA:18585"/>
        <dbReference type="ChEBI" id="CHEBI:57642"/>
        <dbReference type="ChEBI" id="CHEBI:59776"/>
        <dbReference type="EC" id="5.3.1.1"/>
    </reaction>
</comment>
<comment type="pathway">
    <text evidence="1">Carbohydrate biosynthesis; gluconeogenesis.</text>
</comment>
<comment type="pathway">
    <text evidence="1">Carbohydrate degradation; glycolysis; D-glyceraldehyde 3-phosphate from glycerone phosphate: step 1/1.</text>
</comment>
<comment type="subunit">
    <text evidence="1">Homodimer.</text>
</comment>
<comment type="subcellular location">
    <subcellularLocation>
        <location evidence="1">Cytoplasm</location>
    </subcellularLocation>
</comment>
<comment type="similarity">
    <text evidence="1">Belongs to the triosephosphate isomerase family.</text>
</comment>
<feature type="chain" id="PRO_0000307448" description="Triosephosphate isomerase">
    <location>
        <begin position="1"/>
        <end position="249"/>
    </location>
</feature>
<feature type="active site" description="Electrophile" evidence="1">
    <location>
        <position position="95"/>
    </location>
</feature>
<feature type="active site" description="Proton acceptor" evidence="1">
    <location>
        <position position="165"/>
    </location>
</feature>
<feature type="binding site" evidence="1">
    <location>
        <begin position="9"/>
        <end position="11"/>
    </location>
    <ligand>
        <name>substrate</name>
    </ligand>
</feature>
<feature type="binding site" evidence="1">
    <location>
        <position position="171"/>
    </location>
    <ligand>
        <name>substrate</name>
    </ligand>
</feature>
<feature type="binding site" evidence="1">
    <location>
        <position position="211"/>
    </location>
    <ligand>
        <name>substrate</name>
    </ligand>
</feature>
<feature type="binding site" evidence="1">
    <location>
        <begin position="232"/>
        <end position="233"/>
    </location>
    <ligand>
        <name>substrate</name>
    </ligand>
</feature>
<gene>
    <name evidence="1" type="primary">tpiA</name>
    <name type="ordered locus">Cpha266_1852</name>
</gene>
<organism>
    <name type="scientific">Chlorobium phaeobacteroides (strain DSM 266 / SMG 266 / 2430)</name>
    <dbReference type="NCBI Taxonomy" id="290317"/>
    <lineage>
        <taxon>Bacteria</taxon>
        <taxon>Pseudomonadati</taxon>
        <taxon>Chlorobiota</taxon>
        <taxon>Chlorobiia</taxon>
        <taxon>Chlorobiales</taxon>
        <taxon>Chlorobiaceae</taxon>
        <taxon>Chlorobium/Pelodictyon group</taxon>
        <taxon>Chlorobium</taxon>
    </lineage>
</organism>
<reference key="1">
    <citation type="submission" date="2006-12" db="EMBL/GenBank/DDBJ databases">
        <title>Complete sequence of Chlorobium phaeobacteroides DSM 266.</title>
        <authorList>
            <consortium name="US DOE Joint Genome Institute"/>
            <person name="Copeland A."/>
            <person name="Lucas S."/>
            <person name="Lapidus A."/>
            <person name="Barry K."/>
            <person name="Detter J.C."/>
            <person name="Glavina del Rio T."/>
            <person name="Hammon N."/>
            <person name="Israni S."/>
            <person name="Pitluck S."/>
            <person name="Goltsman E."/>
            <person name="Schmutz J."/>
            <person name="Larimer F."/>
            <person name="Land M."/>
            <person name="Hauser L."/>
            <person name="Mikhailova N."/>
            <person name="Li T."/>
            <person name="Overmann J."/>
            <person name="Bryant D.A."/>
            <person name="Richardson P."/>
        </authorList>
    </citation>
    <scope>NUCLEOTIDE SEQUENCE [LARGE SCALE GENOMIC DNA]</scope>
    <source>
        <strain>DSM 266 / SMG 266 / 2430</strain>
    </source>
</reference>
<sequence>MRKKIVVGNWKMNKTVTESLVLAAEVTAALGEGFTGCDVGIAPPFTALYEVGKLTGSRLALVAQNCHFEPDGAFTGEVSASMVREAGCSAVIAGHSERRHCFGETNAIVNRKVKHALSEGLQVIMCAGETLEQREGGVTGDVVTAQVREGLLGIDDISNIVIAYEPVWAIGTGKTATSEQAEEVHLLIRNTVSDLFGEEAAGRLRIQYGGSVKPSNAKELFSMPNIDGGLIGGASLNAADFVAIVKAAV</sequence>